<organism>
    <name type="scientific">Papio hamadryas</name>
    <name type="common">Hamadryas baboon</name>
    <dbReference type="NCBI Taxonomy" id="9557"/>
    <lineage>
        <taxon>Eukaryota</taxon>
        <taxon>Metazoa</taxon>
        <taxon>Chordata</taxon>
        <taxon>Craniata</taxon>
        <taxon>Vertebrata</taxon>
        <taxon>Euteleostomi</taxon>
        <taxon>Mammalia</taxon>
        <taxon>Eutheria</taxon>
        <taxon>Euarchontoglires</taxon>
        <taxon>Primates</taxon>
        <taxon>Haplorrhini</taxon>
        <taxon>Catarrhini</taxon>
        <taxon>Cercopithecidae</taxon>
        <taxon>Cercopithecinae</taxon>
        <taxon>Papio</taxon>
    </lineage>
</organism>
<sequence length="336" mass="35604">MGNCLHPAELSPSTQNSSQLNSEDLWNFSYDGNDSFPDVDYDANLEAAAPCHSCNLLDDSALPFFILVSVLGILASGIVLFMFFRPLFHWQLCPGWPVLAQLAVGSALFSIVVPILAPGLGNTRSSALCSLGYCVWYGSAFAQALLLGCHASLGPKLGADQVPGLTLGLSVGLWGVAALLTLPVTLASGASGGLCTPVYSMELKALQATHAVACLAIFVLLPLGLFGAKGLKKALGMGPGPWMNILWAWFIFWWPHGVVLGLDFLVRSKLLLLSTCLAQQALDLLLNLAEALAILHCVATPLLLALFCHQATRTLLPSLPLPEGWSSHLDTLGSKS</sequence>
<proteinExistence type="inferred from homology"/>
<comment type="function">
    <text evidence="1">Atypical chemokine receptor that controls chemokine levels and localization via high-affinity chemokine binding that is uncoupled from classic ligand-driven signal transduction cascades, resulting instead in chemokine sequestration, degradation, or transcytosis. Also known as interceptor (internalizing receptor) or chemokine-scavenging receptor or chemokine decoy receptor. Has a promiscuous chemokine-binding profile, interacting with inflammatory chemokines of both the CXC and the CC subfamilies but not with homeostatic chemokines. Acts as a receptor for chemokines including CCL2, CCL5, CCL7, CCL11, CCL13, CCL14, CCL17, CXCL5, CXCL6, IL8/CXCL8, CXCL11, GRO, RANTES, MCP-1 and TARC. May regulate chemokine bioavailability and, consequently, leukocyte recruitment through two distinct mechanisms: when expressed in endothelial cells, it sustains the abluminal to luminal transcytosis of tissue-derived chemokines and their subsequent presentation to circulating leukocytes; when expressed in erythrocytes, serves as blood reservoir of cognate chemokines but also as a chemokine sink, buffering potential surges in plasma chemokine levels (By similarity).</text>
</comment>
<comment type="subcellular location">
    <subcellularLocation>
        <location evidence="1">Early endosome</location>
    </subcellularLocation>
    <subcellularLocation>
        <location evidence="1">Recycling endosome</location>
    </subcellularLocation>
    <subcellularLocation>
        <location>Membrane</location>
        <topology>Multi-pass membrane protein</topology>
    </subcellularLocation>
    <text evidence="1">Predominantly localizes to endocytic vesicles, and upon stimulation by the ligand is internalized via caveolae. Once internalized, the ligand dissociates from the receptor, and is targeted to degradation while the receptor is recycled back to the cell membrane (By similarity).</text>
</comment>
<comment type="similarity">
    <text evidence="3">Belongs to the G-protein coupled receptor 1 family. Atypical chemokine receptor subfamily.</text>
</comment>
<protein>
    <recommendedName>
        <fullName>Atypical chemokine receptor 1</fullName>
    </recommendedName>
    <alternativeName>
        <fullName>Duffy antigen/chemokine receptor</fullName>
    </alternativeName>
    <cdAntigenName>CD234</cdAntigenName>
</protein>
<name>ACKR1_PAPHA</name>
<keyword id="KW-1015">Disulfide bond</keyword>
<keyword id="KW-0967">Endosome</keyword>
<keyword id="KW-0297">G-protein coupled receptor</keyword>
<keyword id="KW-0325">Glycoprotein</keyword>
<keyword id="KW-0472">Membrane</keyword>
<keyword id="KW-0675">Receptor</keyword>
<keyword id="KW-0807">Transducer</keyword>
<keyword id="KW-0812">Transmembrane</keyword>
<keyword id="KW-1133">Transmembrane helix</keyword>
<evidence type="ECO:0000250" key="1"/>
<evidence type="ECO:0000255" key="2"/>
<evidence type="ECO:0000305" key="3"/>
<feature type="chain" id="PRO_0000152589" description="Atypical chemokine receptor 1">
    <location>
        <begin position="1"/>
        <end position="336"/>
    </location>
</feature>
<feature type="topological domain" description="Extracellular" evidence="2">
    <location>
        <begin position="1"/>
        <end position="63"/>
    </location>
</feature>
<feature type="transmembrane region" description="Helical; Name=1" evidence="2">
    <location>
        <begin position="64"/>
        <end position="84"/>
    </location>
</feature>
<feature type="topological domain" description="Cytoplasmic" evidence="2">
    <location>
        <begin position="85"/>
        <end position="95"/>
    </location>
</feature>
<feature type="transmembrane region" description="Helical; Name=2" evidence="2">
    <location>
        <begin position="96"/>
        <end position="116"/>
    </location>
</feature>
<feature type="topological domain" description="Extracellular" evidence="2">
    <location>
        <begin position="117"/>
        <end position="129"/>
    </location>
</feature>
<feature type="transmembrane region" description="Helical; Name=3" evidence="2">
    <location>
        <begin position="130"/>
        <end position="153"/>
    </location>
</feature>
<feature type="topological domain" description="Cytoplasmic" evidence="2">
    <location>
        <begin position="154"/>
        <end position="166"/>
    </location>
</feature>
<feature type="transmembrane region" description="Helical; Name=4" evidence="2">
    <location>
        <begin position="167"/>
        <end position="187"/>
    </location>
</feature>
<feature type="topological domain" description="Extracellular" evidence="2">
    <location>
        <begin position="188"/>
        <end position="207"/>
    </location>
</feature>
<feature type="transmembrane region" description="Helical; Name=5" evidence="2">
    <location>
        <begin position="208"/>
        <end position="228"/>
    </location>
</feature>
<feature type="topological domain" description="Cytoplasmic" evidence="2">
    <location>
        <begin position="229"/>
        <end position="244"/>
    </location>
</feature>
<feature type="transmembrane region" description="Helical; Name=6" evidence="2">
    <location>
        <begin position="245"/>
        <end position="265"/>
    </location>
</feature>
<feature type="topological domain" description="Extracellular" evidence="2">
    <location>
        <begin position="266"/>
        <end position="287"/>
    </location>
</feature>
<feature type="transmembrane region" description="Helical; Name=7" evidence="2">
    <location>
        <begin position="288"/>
        <end position="308"/>
    </location>
</feature>
<feature type="topological domain" description="Cytoplasmic" evidence="2">
    <location>
        <begin position="309"/>
        <end position="336"/>
    </location>
</feature>
<feature type="glycosylation site" description="N-linked (GlcNAc...) asparagine" evidence="2">
    <location>
        <position position="16"/>
    </location>
</feature>
<feature type="glycosylation site" description="N-linked (GlcNAc...) asparagine" evidence="2">
    <location>
        <position position="27"/>
    </location>
</feature>
<feature type="glycosylation site" description="N-linked (GlcNAc...) asparagine" evidence="2">
    <location>
        <position position="33"/>
    </location>
</feature>
<feature type="disulfide bond" evidence="1">
    <location>
        <begin position="51"/>
        <end position="276"/>
    </location>
</feature>
<feature type="disulfide bond" evidence="1">
    <location>
        <begin position="129"/>
        <end position="195"/>
    </location>
</feature>
<gene>
    <name type="primary">ACKR1</name>
    <name type="synonym">DARC</name>
    <name type="synonym">FY</name>
</gene>
<dbReference type="EMBL" id="AF303532">
    <property type="protein sequence ID" value="AAL09324.1"/>
    <property type="molecule type" value="Genomic_DNA"/>
</dbReference>
<dbReference type="SMR" id="Q95LG5"/>
<dbReference type="GlyCosmos" id="Q95LG5">
    <property type="glycosylation" value="3 sites, No reported glycans"/>
</dbReference>
<dbReference type="GO" id="GO:0005769">
    <property type="term" value="C:early endosome"/>
    <property type="evidence" value="ECO:0007669"/>
    <property type="project" value="UniProtKB-SubCell"/>
</dbReference>
<dbReference type="GO" id="GO:0016020">
    <property type="term" value="C:membrane"/>
    <property type="evidence" value="ECO:0007669"/>
    <property type="project" value="UniProtKB-SubCell"/>
</dbReference>
<dbReference type="GO" id="GO:0055037">
    <property type="term" value="C:recycling endosome"/>
    <property type="evidence" value="ECO:0007669"/>
    <property type="project" value="UniProtKB-SubCell"/>
</dbReference>
<dbReference type="GO" id="GO:0019957">
    <property type="term" value="F:C-C chemokine binding"/>
    <property type="evidence" value="ECO:0007669"/>
    <property type="project" value="TreeGrafter"/>
</dbReference>
<dbReference type="GO" id="GO:0004930">
    <property type="term" value="F:G protein-coupled receptor activity"/>
    <property type="evidence" value="ECO:0007669"/>
    <property type="project" value="UniProtKB-KW"/>
</dbReference>
<dbReference type="GO" id="GO:0070098">
    <property type="term" value="P:chemokine-mediated signaling pathway"/>
    <property type="evidence" value="ECO:0007669"/>
    <property type="project" value="InterPro"/>
</dbReference>
<dbReference type="GO" id="GO:0006954">
    <property type="term" value="P:inflammatory response"/>
    <property type="evidence" value="ECO:0007669"/>
    <property type="project" value="InterPro"/>
</dbReference>
<dbReference type="GO" id="GO:0032642">
    <property type="term" value="P:regulation of chemokine production"/>
    <property type="evidence" value="ECO:0007669"/>
    <property type="project" value="TreeGrafter"/>
</dbReference>
<dbReference type="CDD" id="cd15010">
    <property type="entry name" value="7tmA_ACKR1_DARC"/>
    <property type="match status" value="1"/>
</dbReference>
<dbReference type="FunFam" id="1.20.1070.10:FF:000266">
    <property type="entry name" value="Atypical chemokine receptor 1"/>
    <property type="match status" value="1"/>
</dbReference>
<dbReference type="Gene3D" id="1.20.1070.10">
    <property type="entry name" value="Rhodopsin 7-helix transmembrane proteins"/>
    <property type="match status" value="1"/>
</dbReference>
<dbReference type="InterPro" id="IPR005384">
    <property type="entry name" value="Duffy_chemokine_rcpt"/>
</dbReference>
<dbReference type="PANTHER" id="PTHR14181:SF1">
    <property type="entry name" value="ATYPICAL CHEMOKINE RECEPTOR 1"/>
    <property type="match status" value="1"/>
</dbReference>
<dbReference type="PANTHER" id="PTHR14181">
    <property type="entry name" value="DUFFY ANTIGEN/CHEMOKINE RECEPTOR"/>
    <property type="match status" value="1"/>
</dbReference>
<dbReference type="PRINTS" id="PR01559">
    <property type="entry name" value="DUFFYANTIGEN"/>
</dbReference>
<reference key="1">
    <citation type="journal article" date="2004" name="Immunogenetics">
        <title>Sequence, evolution and ligand binding properties of mammalian Duffy antigen/receptor for chemokines.</title>
        <authorList>
            <person name="Tournamille C."/>
            <person name="Blancher A."/>
            <person name="Le Van Kim C."/>
            <person name="Gane P."/>
            <person name="Apoil P.-A."/>
            <person name="Nakamoto W."/>
            <person name="Cartron J.-P."/>
            <person name="Colin Y."/>
        </authorList>
    </citation>
    <scope>NUCLEOTIDE SEQUENCE [GENOMIC DNA]</scope>
</reference>
<accession>Q95LG5</accession>